<evidence type="ECO:0000305" key="1"/>
<reference key="1">
    <citation type="submission" date="2004-09" db="EMBL/GenBank/DDBJ databases">
        <title>Ribosomal proteins of Bombyx mori.</title>
        <authorList>
            <person name="Heckel D.G."/>
            <person name="Morgan M."/>
            <person name="Shimada T."/>
            <person name="Mita K."/>
        </authorList>
    </citation>
    <scope>NUCLEOTIDE SEQUENCE [MRNA]</scope>
    <source>
        <strain>p50</strain>
    </source>
</reference>
<sequence length="263" mass="29624">MARGPKKHLKRLNAPKAWMLDKLGGVYAPRPSTGPHKLRECLPLVIFLRNRLKYALTGNEVLKIVKQRLIKVDGKVRTDPTYPAGFMDVVSIEKTNELFRLIYDVKGRFTIHRITPEEAKYKLCKVKRVATGPKNVPYLVTHDGRTIRYPDPLIKVNDSIQLDIATTKIMDFIKFESGNLCMITGGRNLGRVGTIVSRERHPGSFDIVHIKDSTGHTFATRLNNVFIIGKGTKAYISLPRGKGIRLTIAEERDKRIAAKVAAQ</sequence>
<proteinExistence type="evidence at transcript level"/>
<name>RS4_BOMMO</name>
<dbReference type="EMBL" id="AY769318">
    <property type="protein sequence ID" value="AAV34860.1"/>
    <property type="molecule type" value="mRNA"/>
</dbReference>
<dbReference type="RefSeq" id="NP_001037257.1">
    <property type="nucleotide sequence ID" value="NM_001043792.1"/>
</dbReference>
<dbReference type="SMR" id="Q5UAP0"/>
<dbReference type="FunCoup" id="Q5UAP0">
    <property type="interactions" value="963"/>
</dbReference>
<dbReference type="STRING" id="7091.Q5UAP0"/>
<dbReference type="PaxDb" id="7091-BGIBMGA010867-TA"/>
<dbReference type="EnsemblMetazoa" id="NM_001043792.1">
    <property type="protein sequence ID" value="NP_001037257.1"/>
    <property type="gene ID" value="GeneID_692714"/>
</dbReference>
<dbReference type="GeneID" id="692714"/>
<dbReference type="KEGG" id="bmor:692714"/>
<dbReference type="CTD" id="39484"/>
<dbReference type="eggNOG" id="KOG0378">
    <property type="taxonomic scope" value="Eukaryota"/>
</dbReference>
<dbReference type="HOGENOM" id="CLU_060400_1_0_1"/>
<dbReference type="InParanoid" id="Q5UAP0"/>
<dbReference type="OrthoDB" id="312324at7088"/>
<dbReference type="Proteomes" id="UP000005204">
    <property type="component" value="Unassembled WGS sequence"/>
</dbReference>
<dbReference type="GO" id="GO:0022627">
    <property type="term" value="C:cytosolic small ribosomal subunit"/>
    <property type="evidence" value="ECO:0007669"/>
    <property type="project" value="TreeGrafter"/>
</dbReference>
<dbReference type="GO" id="GO:0019843">
    <property type="term" value="F:rRNA binding"/>
    <property type="evidence" value="ECO:0007669"/>
    <property type="project" value="UniProtKB-KW"/>
</dbReference>
<dbReference type="GO" id="GO:0003735">
    <property type="term" value="F:structural constituent of ribosome"/>
    <property type="evidence" value="ECO:0007669"/>
    <property type="project" value="InterPro"/>
</dbReference>
<dbReference type="GO" id="GO:0006412">
    <property type="term" value="P:translation"/>
    <property type="evidence" value="ECO:0007669"/>
    <property type="project" value="InterPro"/>
</dbReference>
<dbReference type="CDD" id="cd06087">
    <property type="entry name" value="KOW_RPS4"/>
    <property type="match status" value="1"/>
</dbReference>
<dbReference type="CDD" id="cd00165">
    <property type="entry name" value="S4"/>
    <property type="match status" value="1"/>
</dbReference>
<dbReference type="FunFam" id="2.30.30.30:FF:000005">
    <property type="entry name" value="40S ribosomal protein S4"/>
    <property type="match status" value="1"/>
</dbReference>
<dbReference type="FunFam" id="2.40.50.740:FF:000001">
    <property type="entry name" value="40S ribosomal protein S4"/>
    <property type="match status" value="1"/>
</dbReference>
<dbReference type="FunFam" id="3.10.290.10:FF:000051">
    <property type="entry name" value="40S ribosomal protein S4, X isoform"/>
    <property type="match status" value="1"/>
</dbReference>
<dbReference type="Gene3D" id="2.30.30.30">
    <property type="match status" value="1"/>
</dbReference>
<dbReference type="Gene3D" id="2.40.50.740">
    <property type="match status" value="1"/>
</dbReference>
<dbReference type="Gene3D" id="3.10.290.10">
    <property type="entry name" value="RNA-binding S4 domain"/>
    <property type="match status" value="1"/>
</dbReference>
<dbReference type="HAMAP" id="MF_00485">
    <property type="entry name" value="Ribosomal_eS4"/>
    <property type="match status" value="1"/>
</dbReference>
<dbReference type="InterPro" id="IPR005824">
    <property type="entry name" value="KOW"/>
</dbReference>
<dbReference type="InterPro" id="IPR014722">
    <property type="entry name" value="Rib_uL2_dom2"/>
</dbReference>
<dbReference type="InterPro" id="IPR000876">
    <property type="entry name" value="Ribosomal_eS4"/>
</dbReference>
<dbReference type="InterPro" id="IPR032277">
    <property type="entry name" value="Ribosomal_eS4_C"/>
</dbReference>
<dbReference type="InterPro" id="IPR013845">
    <property type="entry name" value="Ribosomal_eS4_central_region"/>
</dbReference>
<dbReference type="InterPro" id="IPR038237">
    <property type="entry name" value="Ribosomal_eS4_central_sf"/>
</dbReference>
<dbReference type="InterPro" id="IPR041982">
    <property type="entry name" value="Ribosomal_eS4_KOW"/>
</dbReference>
<dbReference type="InterPro" id="IPR013843">
    <property type="entry name" value="Ribosomal_eS4_N"/>
</dbReference>
<dbReference type="InterPro" id="IPR018199">
    <property type="entry name" value="Ribosomal_eS4_N_CS"/>
</dbReference>
<dbReference type="InterPro" id="IPR002942">
    <property type="entry name" value="S4_RNA-bd"/>
</dbReference>
<dbReference type="InterPro" id="IPR036986">
    <property type="entry name" value="S4_RNA-bd_sf"/>
</dbReference>
<dbReference type="PANTHER" id="PTHR11581">
    <property type="entry name" value="30S/40S RIBOSOMAL PROTEIN S4"/>
    <property type="match status" value="1"/>
</dbReference>
<dbReference type="PANTHER" id="PTHR11581:SF0">
    <property type="entry name" value="SMALL RIBOSOMAL SUBUNIT PROTEIN ES4"/>
    <property type="match status" value="1"/>
</dbReference>
<dbReference type="Pfam" id="PF16121">
    <property type="entry name" value="40S_S4_C"/>
    <property type="match status" value="1"/>
</dbReference>
<dbReference type="Pfam" id="PF00467">
    <property type="entry name" value="KOW"/>
    <property type="match status" value="1"/>
</dbReference>
<dbReference type="Pfam" id="PF00900">
    <property type="entry name" value="Ribosomal_S4e"/>
    <property type="match status" value="1"/>
</dbReference>
<dbReference type="Pfam" id="PF08071">
    <property type="entry name" value="RS4NT"/>
    <property type="match status" value="1"/>
</dbReference>
<dbReference type="Pfam" id="PF01479">
    <property type="entry name" value="S4"/>
    <property type="match status" value="1"/>
</dbReference>
<dbReference type="PIRSF" id="PIRSF002116">
    <property type="entry name" value="Ribosomal_S4"/>
    <property type="match status" value="1"/>
</dbReference>
<dbReference type="SMART" id="SM00739">
    <property type="entry name" value="KOW"/>
    <property type="match status" value="1"/>
</dbReference>
<dbReference type="SMART" id="SM00363">
    <property type="entry name" value="S4"/>
    <property type="match status" value="1"/>
</dbReference>
<dbReference type="SUPFAM" id="SSF55174">
    <property type="entry name" value="Alpha-L RNA-binding motif"/>
    <property type="match status" value="1"/>
</dbReference>
<dbReference type="PROSITE" id="PS00528">
    <property type="entry name" value="RIBOSOMAL_S4E"/>
    <property type="match status" value="1"/>
</dbReference>
<dbReference type="PROSITE" id="PS50889">
    <property type="entry name" value="S4"/>
    <property type="match status" value="1"/>
</dbReference>
<accession>Q5UAP0</accession>
<feature type="chain" id="PRO_0000260286" description="Small ribosomal subunit protein eS4">
    <location>
        <begin position="1"/>
        <end position="263"/>
    </location>
</feature>
<feature type="domain" description="S4 RNA-binding">
    <location>
        <begin position="42"/>
        <end position="104"/>
    </location>
</feature>
<gene>
    <name type="primary">RpS4</name>
</gene>
<comment type="similarity">
    <text evidence="1">Belongs to the eukaryotic ribosomal protein eS4 family.</text>
</comment>
<keyword id="KW-1185">Reference proteome</keyword>
<keyword id="KW-0687">Ribonucleoprotein</keyword>
<keyword id="KW-0689">Ribosomal protein</keyword>
<keyword id="KW-0694">RNA-binding</keyword>
<keyword id="KW-0699">rRNA-binding</keyword>
<organism>
    <name type="scientific">Bombyx mori</name>
    <name type="common">Silk moth</name>
    <dbReference type="NCBI Taxonomy" id="7091"/>
    <lineage>
        <taxon>Eukaryota</taxon>
        <taxon>Metazoa</taxon>
        <taxon>Ecdysozoa</taxon>
        <taxon>Arthropoda</taxon>
        <taxon>Hexapoda</taxon>
        <taxon>Insecta</taxon>
        <taxon>Pterygota</taxon>
        <taxon>Neoptera</taxon>
        <taxon>Endopterygota</taxon>
        <taxon>Lepidoptera</taxon>
        <taxon>Glossata</taxon>
        <taxon>Ditrysia</taxon>
        <taxon>Bombycoidea</taxon>
        <taxon>Bombycidae</taxon>
        <taxon>Bombycinae</taxon>
        <taxon>Bombyx</taxon>
    </lineage>
</organism>
<protein>
    <recommendedName>
        <fullName evidence="1">Small ribosomal subunit protein eS4</fullName>
    </recommendedName>
    <alternativeName>
        <fullName>40S ribosomal protein S4</fullName>
    </alternativeName>
</protein>